<reference key="1">
    <citation type="journal article" date="2001" name="Nature">
        <title>Complete genome sequence of Salmonella enterica serovar Typhimurium LT2.</title>
        <authorList>
            <person name="McClelland M."/>
            <person name="Sanderson K.E."/>
            <person name="Spieth J."/>
            <person name="Clifton S.W."/>
            <person name="Latreille P."/>
            <person name="Courtney L."/>
            <person name="Porwollik S."/>
            <person name="Ali J."/>
            <person name="Dante M."/>
            <person name="Du F."/>
            <person name="Hou S."/>
            <person name="Layman D."/>
            <person name="Leonard S."/>
            <person name="Nguyen C."/>
            <person name="Scott K."/>
            <person name="Holmes A."/>
            <person name="Grewal N."/>
            <person name="Mulvaney E."/>
            <person name="Ryan E."/>
            <person name="Sun H."/>
            <person name="Florea L."/>
            <person name="Miller W."/>
            <person name="Stoneking T."/>
            <person name="Nhan M."/>
            <person name="Waterston R."/>
            <person name="Wilson R.K."/>
        </authorList>
    </citation>
    <scope>NUCLEOTIDE SEQUENCE [LARGE SCALE GENOMIC DNA]</scope>
    <source>
        <strain>LT2 / SGSC1412 / ATCC 700720</strain>
    </source>
</reference>
<accession>Q8ZRX9</accession>
<name>CITG1_SALTY</name>
<proteinExistence type="inferred from homology"/>
<sequence>MNVSVVTERRTPAYSSLAAGELNGLVARALLTEARLTPKPGLVDIRNSGAHRDMDLAAFERSTTAIAPWMEKFFIMGNNTAALAAENVLVMLRPLGMACENDMLQATNGVNTHRGAIFAFGLLSAAIGRLLARGEPLEQNRICDQVARLSRNIVAHELSAKKAGKLTKSETHFQCYGLSGARGEAESGFRTVRTQALPVFNRVVQEHDDTHLALLQTLLHLMAWNDDTNLVSRGGLEGLYYVQQQAQKLLWQGGVLVEGGIEAMQSLDDELILRNLSPGGSADLLAVTWFLSHFPAGSLYPE</sequence>
<dbReference type="EC" id="2.4.2.52" evidence="1"/>
<dbReference type="EMBL" id="AE006468">
    <property type="protein sequence ID" value="AAL19027.1"/>
    <property type="molecule type" value="Genomic_DNA"/>
</dbReference>
<dbReference type="STRING" id="99287.STM0063"/>
<dbReference type="PaxDb" id="99287-STM0063"/>
<dbReference type="KEGG" id="stm:STM0063"/>
<dbReference type="PATRIC" id="fig|99287.12.peg.65"/>
<dbReference type="HOGENOM" id="CLU_056179_1_0_6"/>
<dbReference type="OMA" id="FFIMGHD"/>
<dbReference type="PhylomeDB" id="Q8ZRX9"/>
<dbReference type="BioCyc" id="SENT99287:STM0063-MONOMER"/>
<dbReference type="Proteomes" id="UP000001014">
    <property type="component" value="Chromosome"/>
</dbReference>
<dbReference type="GO" id="GO:0005524">
    <property type="term" value="F:ATP binding"/>
    <property type="evidence" value="ECO:0007669"/>
    <property type="project" value="UniProtKB-KW"/>
</dbReference>
<dbReference type="GO" id="GO:0046917">
    <property type="term" value="F:triphosphoribosyl-dephospho-CoA synthase activity"/>
    <property type="evidence" value="ECO:0000318"/>
    <property type="project" value="GO_Central"/>
</dbReference>
<dbReference type="GO" id="GO:0051191">
    <property type="term" value="P:prosthetic group biosynthetic process"/>
    <property type="evidence" value="ECO:0000318"/>
    <property type="project" value="GO_Central"/>
</dbReference>
<dbReference type="FunFam" id="1.10.4200.10:FF:000001">
    <property type="entry name" value="Triphosphoribosyl-dephospho-CoA synthase CitG"/>
    <property type="match status" value="1"/>
</dbReference>
<dbReference type="Gene3D" id="1.10.4200.10">
    <property type="entry name" value="Triphosphoribosyl-dephospho-CoA protein"/>
    <property type="match status" value="1"/>
</dbReference>
<dbReference type="HAMAP" id="MF_00397">
    <property type="entry name" value="CitG"/>
    <property type="match status" value="1"/>
</dbReference>
<dbReference type="InterPro" id="IPR002736">
    <property type="entry name" value="CitG"/>
</dbReference>
<dbReference type="InterPro" id="IPR017551">
    <property type="entry name" value="TriPribosyl-deP-CoA_syn_CitG"/>
</dbReference>
<dbReference type="NCBIfam" id="TIGR03125">
    <property type="entry name" value="citrate_citG"/>
    <property type="match status" value="1"/>
</dbReference>
<dbReference type="PANTHER" id="PTHR30201:SF2">
    <property type="entry name" value="2-(5''-TRIPHOSPHORIBOSYL)-3'-DEPHOSPHOCOENZYME-A SYNTHASE"/>
    <property type="match status" value="1"/>
</dbReference>
<dbReference type="PANTHER" id="PTHR30201">
    <property type="entry name" value="TRIPHOSPHORIBOSYL-DEPHOSPHO-COA SYNTHASE"/>
    <property type="match status" value="1"/>
</dbReference>
<dbReference type="Pfam" id="PF01874">
    <property type="entry name" value="CitG"/>
    <property type="match status" value="1"/>
</dbReference>
<keyword id="KW-0067">ATP-binding</keyword>
<keyword id="KW-0547">Nucleotide-binding</keyword>
<keyword id="KW-1185">Reference proteome</keyword>
<keyword id="KW-0808">Transferase</keyword>
<comment type="catalytic activity">
    <reaction evidence="1">
        <text>3'-dephospho-CoA + ATP = 2'-(5''-triphospho-alpha-D-ribosyl)-3'-dephospho-CoA + adenine</text>
        <dbReference type="Rhea" id="RHEA:15117"/>
        <dbReference type="ChEBI" id="CHEBI:16708"/>
        <dbReference type="ChEBI" id="CHEBI:30616"/>
        <dbReference type="ChEBI" id="CHEBI:57328"/>
        <dbReference type="ChEBI" id="CHEBI:61378"/>
        <dbReference type="EC" id="2.4.2.52"/>
    </reaction>
</comment>
<comment type="similarity">
    <text evidence="1">Belongs to the CitG/MdcB family.</text>
</comment>
<protein>
    <recommendedName>
        <fullName evidence="1">Probable 2-(5''-triphosphoribosyl)-3'-dephosphocoenzyme-A synthase 1</fullName>
        <shortName evidence="1">2-(5''-triphosphoribosyl)-3'-dephospho-CoA synthase 1</shortName>
        <ecNumber evidence="1">2.4.2.52</ecNumber>
    </recommendedName>
</protein>
<organism>
    <name type="scientific">Salmonella typhimurium (strain LT2 / SGSC1412 / ATCC 700720)</name>
    <dbReference type="NCBI Taxonomy" id="99287"/>
    <lineage>
        <taxon>Bacteria</taxon>
        <taxon>Pseudomonadati</taxon>
        <taxon>Pseudomonadota</taxon>
        <taxon>Gammaproteobacteria</taxon>
        <taxon>Enterobacterales</taxon>
        <taxon>Enterobacteriaceae</taxon>
        <taxon>Salmonella</taxon>
    </lineage>
</organism>
<gene>
    <name evidence="1" type="primary">citG1</name>
    <name type="ordered locus">STM0063</name>
</gene>
<evidence type="ECO:0000255" key="1">
    <source>
        <dbReference type="HAMAP-Rule" id="MF_00397"/>
    </source>
</evidence>
<feature type="chain" id="PRO_0000255413" description="Probable 2-(5''-triphosphoribosyl)-3'-dephosphocoenzyme-A synthase 1">
    <location>
        <begin position="1"/>
        <end position="302"/>
    </location>
</feature>